<keyword id="KW-0002">3D-structure</keyword>
<keyword id="KW-0963">Cytoplasm</keyword>
<keyword id="KW-0269">Exonuclease</keyword>
<keyword id="KW-0378">Hydrolase</keyword>
<keyword id="KW-0540">Nuclease</keyword>
<keyword id="KW-1185">Reference proteome</keyword>
<dbReference type="EC" id="3.1.11.6" evidence="1"/>
<dbReference type="EMBL" id="BX640419">
    <property type="protein sequence ID" value="CAE43073.1"/>
    <property type="molecule type" value="Genomic_DNA"/>
</dbReference>
<dbReference type="RefSeq" id="NP_881400.1">
    <property type="nucleotide sequence ID" value="NC_002929.2"/>
</dbReference>
<dbReference type="RefSeq" id="WP_003813109.1">
    <property type="nucleotide sequence ID" value="NZ_CP039022.1"/>
</dbReference>
<dbReference type="PDB" id="1VP7">
    <property type="method" value="X-ray"/>
    <property type="resolution" value="2.40 A"/>
    <property type="chains" value="A/B/C/D/E/F=1-88"/>
</dbReference>
<dbReference type="PDBsum" id="1VP7"/>
<dbReference type="SMR" id="Q7VV85"/>
<dbReference type="STRING" id="257313.BP2800"/>
<dbReference type="PaxDb" id="257313-BP2800"/>
<dbReference type="KEGG" id="bpe:BP2800"/>
<dbReference type="PATRIC" id="fig|257313.5.peg.3020"/>
<dbReference type="eggNOG" id="COG1722">
    <property type="taxonomic scope" value="Bacteria"/>
</dbReference>
<dbReference type="HOGENOM" id="CLU_145918_2_0_4"/>
<dbReference type="EvolutionaryTrace" id="Q7VV85"/>
<dbReference type="Proteomes" id="UP000002676">
    <property type="component" value="Chromosome"/>
</dbReference>
<dbReference type="GO" id="GO:0005829">
    <property type="term" value="C:cytosol"/>
    <property type="evidence" value="ECO:0007669"/>
    <property type="project" value="TreeGrafter"/>
</dbReference>
<dbReference type="GO" id="GO:0009318">
    <property type="term" value="C:exodeoxyribonuclease VII complex"/>
    <property type="evidence" value="ECO:0007669"/>
    <property type="project" value="InterPro"/>
</dbReference>
<dbReference type="GO" id="GO:0008855">
    <property type="term" value="F:exodeoxyribonuclease VII activity"/>
    <property type="evidence" value="ECO:0007669"/>
    <property type="project" value="UniProtKB-UniRule"/>
</dbReference>
<dbReference type="GO" id="GO:0006308">
    <property type="term" value="P:DNA catabolic process"/>
    <property type="evidence" value="ECO:0007669"/>
    <property type="project" value="UniProtKB-UniRule"/>
</dbReference>
<dbReference type="Gene3D" id="1.10.287.1040">
    <property type="entry name" value="Exonuclease VII, small subunit"/>
    <property type="match status" value="1"/>
</dbReference>
<dbReference type="HAMAP" id="MF_00337">
    <property type="entry name" value="Exonuc_7_S"/>
    <property type="match status" value="1"/>
</dbReference>
<dbReference type="InterPro" id="IPR003761">
    <property type="entry name" value="Exonuc_VII_S"/>
</dbReference>
<dbReference type="InterPro" id="IPR037004">
    <property type="entry name" value="Exonuc_VII_ssu_sf"/>
</dbReference>
<dbReference type="NCBIfam" id="NF002140">
    <property type="entry name" value="PRK00977.1-4"/>
    <property type="match status" value="1"/>
</dbReference>
<dbReference type="NCBIfam" id="NF002141">
    <property type="entry name" value="PRK00977.1-5"/>
    <property type="match status" value="1"/>
</dbReference>
<dbReference type="NCBIfam" id="TIGR01280">
    <property type="entry name" value="xseB"/>
    <property type="match status" value="1"/>
</dbReference>
<dbReference type="PANTHER" id="PTHR34137">
    <property type="entry name" value="EXODEOXYRIBONUCLEASE 7 SMALL SUBUNIT"/>
    <property type="match status" value="1"/>
</dbReference>
<dbReference type="PANTHER" id="PTHR34137:SF1">
    <property type="entry name" value="EXODEOXYRIBONUCLEASE 7 SMALL SUBUNIT"/>
    <property type="match status" value="1"/>
</dbReference>
<dbReference type="Pfam" id="PF02609">
    <property type="entry name" value="Exonuc_VII_S"/>
    <property type="match status" value="1"/>
</dbReference>
<dbReference type="PIRSF" id="PIRSF006488">
    <property type="entry name" value="Exonuc_VII_S"/>
    <property type="match status" value="1"/>
</dbReference>
<dbReference type="SUPFAM" id="SSF116842">
    <property type="entry name" value="XseB-like"/>
    <property type="match status" value="1"/>
</dbReference>
<feature type="chain" id="PRO_0000206927" description="Exodeoxyribonuclease 7 small subunit">
    <location>
        <begin position="1"/>
        <end position="88"/>
    </location>
</feature>
<feature type="helix" evidence="3">
    <location>
        <begin position="20"/>
        <end position="35"/>
    </location>
</feature>
<feature type="helix" evidence="3">
    <location>
        <begin position="41"/>
        <end position="77"/>
    </location>
</feature>
<protein>
    <recommendedName>
        <fullName evidence="1">Exodeoxyribonuclease 7 small subunit</fullName>
        <ecNumber evidence="1">3.1.11.6</ecNumber>
    </recommendedName>
    <alternativeName>
        <fullName evidence="1">Exodeoxyribonuclease VII small subunit</fullName>
        <shortName evidence="1">Exonuclease VII small subunit</shortName>
    </alternativeName>
</protein>
<name>EX7S_BORPE</name>
<reference key="1">
    <citation type="journal article" date="2003" name="Nat. Genet.">
        <title>Comparative analysis of the genome sequences of Bordetella pertussis, Bordetella parapertussis and Bordetella bronchiseptica.</title>
        <authorList>
            <person name="Parkhill J."/>
            <person name="Sebaihia M."/>
            <person name="Preston A."/>
            <person name="Murphy L.D."/>
            <person name="Thomson N.R."/>
            <person name="Harris D.E."/>
            <person name="Holden M.T.G."/>
            <person name="Churcher C.M."/>
            <person name="Bentley S.D."/>
            <person name="Mungall K.L."/>
            <person name="Cerdeno-Tarraga A.-M."/>
            <person name="Temple L."/>
            <person name="James K.D."/>
            <person name="Harris B."/>
            <person name="Quail M.A."/>
            <person name="Achtman M."/>
            <person name="Atkin R."/>
            <person name="Baker S."/>
            <person name="Basham D."/>
            <person name="Bason N."/>
            <person name="Cherevach I."/>
            <person name="Chillingworth T."/>
            <person name="Collins M."/>
            <person name="Cronin A."/>
            <person name="Davis P."/>
            <person name="Doggett J."/>
            <person name="Feltwell T."/>
            <person name="Goble A."/>
            <person name="Hamlin N."/>
            <person name="Hauser H."/>
            <person name="Holroyd S."/>
            <person name="Jagels K."/>
            <person name="Leather S."/>
            <person name="Moule S."/>
            <person name="Norberczak H."/>
            <person name="O'Neil S."/>
            <person name="Ormond D."/>
            <person name="Price C."/>
            <person name="Rabbinowitsch E."/>
            <person name="Rutter S."/>
            <person name="Sanders M."/>
            <person name="Saunders D."/>
            <person name="Seeger K."/>
            <person name="Sharp S."/>
            <person name="Simmonds M."/>
            <person name="Skelton J."/>
            <person name="Squares R."/>
            <person name="Squares S."/>
            <person name="Stevens K."/>
            <person name="Unwin L."/>
            <person name="Whitehead S."/>
            <person name="Barrell B.G."/>
            <person name="Maskell D.J."/>
        </authorList>
    </citation>
    <scope>NUCLEOTIDE SEQUENCE [LARGE SCALE GENOMIC DNA]</scope>
    <source>
        <strain>Tohama I / ATCC BAA-589 / NCTC 13251</strain>
    </source>
</reference>
<reference evidence="2" key="2">
    <citation type="submission" date="2004-10" db="PDB data bank">
        <title>Crystal structure of Exodeoxyribonuclease VII small subunit E.C.3.1.11.6 (NP_881400.1) from Bordetella pertussis at 2.40 A resolution.</title>
        <authorList>
            <consortium name="Joint Center For Structural Genomics (Jcsg)"/>
        </authorList>
    </citation>
    <scope>X-RAY CRYSTALLOGRAPHY (2.40 ANGSTROMS)</scope>
</reference>
<comment type="function">
    <text evidence="1">Bidirectionally degrades single-stranded DNA into large acid-insoluble oligonucleotides, which are then degraded further into small acid-soluble oligonucleotides.</text>
</comment>
<comment type="catalytic activity">
    <reaction evidence="1">
        <text>Exonucleolytic cleavage in either 5'- to 3'- or 3'- to 5'-direction to yield nucleoside 5'-phosphates.</text>
        <dbReference type="EC" id="3.1.11.6"/>
    </reaction>
</comment>
<comment type="subunit">
    <text evidence="1">Heterooligomer composed of large and small subunits.</text>
</comment>
<comment type="subcellular location">
    <subcellularLocation>
        <location evidence="1">Cytoplasm</location>
    </subcellularLocation>
</comment>
<comment type="similarity">
    <text evidence="1">Belongs to the XseB family.</text>
</comment>
<accession>Q7VV85</accession>
<proteinExistence type="evidence at protein level"/>
<evidence type="ECO:0000255" key="1">
    <source>
        <dbReference type="HAMAP-Rule" id="MF_00337"/>
    </source>
</evidence>
<evidence type="ECO:0007744" key="2">
    <source>
        <dbReference type="PDB" id="1VP7"/>
    </source>
</evidence>
<evidence type="ECO:0007829" key="3">
    <source>
        <dbReference type="PDB" id="1VP7"/>
    </source>
</evidence>
<organism>
    <name type="scientific">Bordetella pertussis (strain Tohama I / ATCC BAA-589 / NCTC 13251)</name>
    <dbReference type="NCBI Taxonomy" id="257313"/>
    <lineage>
        <taxon>Bacteria</taxon>
        <taxon>Pseudomonadati</taxon>
        <taxon>Pseudomonadota</taxon>
        <taxon>Betaproteobacteria</taxon>
        <taxon>Burkholderiales</taxon>
        <taxon>Alcaligenaceae</taxon>
        <taxon>Bordetella</taxon>
    </lineage>
</organism>
<sequence>MASSKQADPQTDARPLPQDFETALAELESLVSAMENGTLPLEQSLSAYRRGVELARVCQDRLAQAEQQVKVLEGDLLRPLDPAALDDE</sequence>
<gene>
    <name evidence="1" type="primary">xseB</name>
    <name type="ordered locus">BP2800</name>
</gene>